<evidence type="ECO:0000250" key="1"/>
<evidence type="ECO:0000255" key="2">
    <source>
        <dbReference type="HAMAP-Rule" id="MF_00100"/>
    </source>
</evidence>
<evidence type="ECO:0000256" key="3">
    <source>
        <dbReference type="SAM" id="MobiDB-lite"/>
    </source>
</evidence>
<organism>
    <name type="scientific">Finegoldia magna (strain ATCC 29328 / DSM 20472 / WAL 2508)</name>
    <name type="common">Peptostreptococcus magnus</name>
    <dbReference type="NCBI Taxonomy" id="334413"/>
    <lineage>
        <taxon>Bacteria</taxon>
        <taxon>Bacillati</taxon>
        <taxon>Bacillota</taxon>
        <taxon>Tissierellia</taxon>
        <taxon>Tissierellales</taxon>
        <taxon>Peptoniphilaceae</taxon>
        <taxon>Finegoldia</taxon>
    </lineage>
</organism>
<gene>
    <name evidence="2" type="primary">infB</name>
    <name type="ordered locus">FMG_0767</name>
</gene>
<protein>
    <recommendedName>
        <fullName evidence="2">Translation initiation factor IF-2</fullName>
    </recommendedName>
</protein>
<feature type="chain" id="PRO_1000093785" description="Translation initiation factor IF-2">
    <location>
        <begin position="1"/>
        <end position="763"/>
    </location>
</feature>
<feature type="domain" description="tr-type G">
    <location>
        <begin position="265"/>
        <end position="434"/>
    </location>
</feature>
<feature type="region of interest" description="Disordered" evidence="3">
    <location>
        <begin position="52"/>
        <end position="178"/>
    </location>
</feature>
<feature type="region of interest" description="G1" evidence="1">
    <location>
        <begin position="274"/>
        <end position="281"/>
    </location>
</feature>
<feature type="region of interest" description="G2" evidence="1">
    <location>
        <begin position="299"/>
        <end position="303"/>
    </location>
</feature>
<feature type="region of interest" description="G3" evidence="1">
    <location>
        <begin position="320"/>
        <end position="323"/>
    </location>
</feature>
<feature type="region of interest" description="G4" evidence="1">
    <location>
        <begin position="374"/>
        <end position="377"/>
    </location>
</feature>
<feature type="region of interest" description="G5" evidence="1">
    <location>
        <begin position="410"/>
        <end position="412"/>
    </location>
</feature>
<feature type="compositionally biased region" description="Basic and acidic residues" evidence="3">
    <location>
        <begin position="65"/>
        <end position="82"/>
    </location>
</feature>
<feature type="compositionally biased region" description="Polar residues" evidence="3">
    <location>
        <begin position="86"/>
        <end position="96"/>
    </location>
</feature>
<feature type="compositionally biased region" description="Basic and acidic residues" evidence="3">
    <location>
        <begin position="105"/>
        <end position="116"/>
    </location>
</feature>
<feature type="compositionally biased region" description="Basic and acidic residues" evidence="3">
    <location>
        <begin position="123"/>
        <end position="135"/>
    </location>
</feature>
<feature type="compositionally biased region" description="Basic residues" evidence="3">
    <location>
        <begin position="136"/>
        <end position="145"/>
    </location>
</feature>
<feature type="compositionally biased region" description="Low complexity" evidence="3">
    <location>
        <begin position="146"/>
        <end position="161"/>
    </location>
</feature>
<feature type="compositionally biased region" description="Basic and acidic residues" evidence="3">
    <location>
        <begin position="162"/>
        <end position="178"/>
    </location>
</feature>
<feature type="binding site" evidence="2">
    <location>
        <begin position="274"/>
        <end position="281"/>
    </location>
    <ligand>
        <name>GTP</name>
        <dbReference type="ChEBI" id="CHEBI:37565"/>
    </ligand>
</feature>
<feature type="binding site" evidence="2">
    <location>
        <begin position="320"/>
        <end position="324"/>
    </location>
    <ligand>
        <name>GTP</name>
        <dbReference type="ChEBI" id="CHEBI:37565"/>
    </ligand>
</feature>
<feature type="binding site" evidence="2">
    <location>
        <begin position="374"/>
        <end position="377"/>
    </location>
    <ligand>
        <name>GTP</name>
        <dbReference type="ChEBI" id="CHEBI:37565"/>
    </ligand>
</feature>
<keyword id="KW-0963">Cytoplasm</keyword>
<keyword id="KW-0342">GTP-binding</keyword>
<keyword id="KW-0396">Initiation factor</keyword>
<keyword id="KW-0547">Nucleotide-binding</keyword>
<keyword id="KW-0648">Protein biosynthesis</keyword>
<keyword id="KW-1185">Reference proteome</keyword>
<name>IF2_FINM2</name>
<reference key="1">
    <citation type="journal article" date="2008" name="DNA Res.">
        <title>Complete genome sequence of Finegoldia magna, an anaerobic opportunistic pathogen.</title>
        <authorList>
            <person name="Goto T."/>
            <person name="Yamashita A."/>
            <person name="Hirakawa H."/>
            <person name="Matsutani M."/>
            <person name="Todo K."/>
            <person name="Ohshima K."/>
            <person name="Toh H."/>
            <person name="Miyamoto K."/>
            <person name="Kuhara S."/>
            <person name="Hattori M."/>
            <person name="Shimizu T."/>
            <person name="Akimoto S."/>
        </authorList>
    </citation>
    <scope>NUCLEOTIDE SEQUENCE [LARGE SCALE GENOMIC DNA]</scope>
    <source>
        <strain>ATCC 29328 / DSM 20472 / WAL 2508</strain>
    </source>
</reference>
<accession>B0S1E5</accession>
<sequence length="763" mass="85139">MEKIRVYELAKQLNVSTKDLMSKLKDNKIEVKSHMSTLDKDQIAKVKSFYEKQKKVQTSQNNSKSNDENKKITNKNTEKTTEKISTVDSNKQNNSNKRFKPKHPRNNDEESVSHFDKIKHKNKSEMNEKRDLNDKKKNKNFKNTKNKNSNNNKNSKNNKNNKNNDHNRKDEAIKHETKEPKKFIIQPTITVKDLSEKISVSISELIMKLMELGIMANQNQEIDFDTASLVAGEFDVIVEQDEVEDFDDDDVFNLDFEDKKEDLKERPPVITVMGHVDHGKTSILDRIRNSRVAGREAGGITQHIGAYTIRVNDKKIVFLDTPGHEAFTAMRSRGAQVTDVSILVVAADDGVMPQTIEAINHSKAAGVPIIVAINKIDKENANIERVKTELAENGLVPEDWGGDTVLVPVSARTGEGIDDLLEMILMVAEMEELKANPNRLAVGTVIEAQLDKGRGPTATILVQKGTLKHSDMVFSGQASGRIRAMFNDQGKQVKKAGPSTPVLILGLNEVPEAGDMIYAVKDEKEARNYAQKIKDHNREEQIKSSSTMNLDELFGKISDGETKDLNIIIKTDVKGTIDAIKQSLIKLSNEEVKVNIIHGAVGGITESDVNLASASSAIIIGFNVRPTQVAMDMAKNESIEIRTYRVIYDAIEDVKNAITGMLKPQYQEEVLGRATVRDTFKVPGVGTVAGVYVNTGKVTRNATVRLLRDEILIFEGPVSSLKRYKDDVKELTQGYEGGMGLENYNDIKPGDVLEAYVLNEVQR</sequence>
<proteinExistence type="inferred from homology"/>
<dbReference type="EMBL" id="AP008971">
    <property type="protein sequence ID" value="BAG08185.1"/>
    <property type="molecule type" value="Genomic_DNA"/>
</dbReference>
<dbReference type="RefSeq" id="WP_012290616.1">
    <property type="nucleotide sequence ID" value="NC_010376.1"/>
</dbReference>
<dbReference type="SMR" id="B0S1E5"/>
<dbReference type="STRING" id="334413.FMG_0767"/>
<dbReference type="KEGG" id="fma:FMG_0767"/>
<dbReference type="eggNOG" id="COG0532">
    <property type="taxonomic scope" value="Bacteria"/>
</dbReference>
<dbReference type="HOGENOM" id="CLU_006301_5_1_9"/>
<dbReference type="Proteomes" id="UP000001319">
    <property type="component" value="Chromosome"/>
</dbReference>
<dbReference type="GO" id="GO:0005829">
    <property type="term" value="C:cytosol"/>
    <property type="evidence" value="ECO:0007669"/>
    <property type="project" value="TreeGrafter"/>
</dbReference>
<dbReference type="GO" id="GO:0005525">
    <property type="term" value="F:GTP binding"/>
    <property type="evidence" value="ECO:0007669"/>
    <property type="project" value="UniProtKB-KW"/>
</dbReference>
<dbReference type="GO" id="GO:0003924">
    <property type="term" value="F:GTPase activity"/>
    <property type="evidence" value="ECO:0007669"/>
    <property type="project" value="UniProtKB-UniRule"/>
</dbReference>
<dbReference type="GO" id="GO:0003743">
    <property type="term" value="F:translation initiation factor activity"/>
    <property type="evidence" value="ECO:0007669"/>
    <property type="project" value="UniProtKB-UniRule"/>
</dbReference>
<dbReference type="CDD" id="cd01887">
    <property type="entry name" value="IF2_eIF5B"/>
    <property type="match status" value="1"/>
</dbReference>
<dbReference type="CDD" id="cd03702">
    <property type="entry name" value="IF2_mtIF2_II"/>
    <property type="match status" value="1"/>
</dbReference>
<dbReference type="CDD" id="cd03692">
    <property type="entry name" value="mtIF2_IVc"/>
    <property type="match status" value="1"/>
</dbReference>
<dbReference type="FunFam" id="2.40.30.10:FF:000007">
    <property type="entry name" value="Translation initiation factor IF-2"/>
    <property type="match status" value="1"/>
</dbReference>
<dbReference type="FunFam" id="2.40.30.10:FF:000008">
    <property type="entry name" value="Translation initiation factor IF-2"/>
    <property type="match status" value="1"/>
</dbReference>
<dbReference type="FunFam" id="3.40.50.10050:FF:000001">
    <property type="entry name" value="Translation initiation factor IF-2"/>
    <property type="match status" value="1"/>
</dbReference>
<dbReference type="FunFam" id="3.40.50.300:FF:000019">
    <property type="entry name" value="Translation initiation factor IF-2"/>
    <property type="match status" value="1"/>
</dbReference>
<dbReference type="Gene3D" id="1.10.10.2480">
    <property type="match status" value="1"/>
</dbReference>
<dbReference type="Gene3D" id="3.40.50.300">
    <property type="entry name" value="P-loop containing nucleotide triphosphate hydrolases"/>
    <property type="match status" value="1"/>
</dbReference>
<dbReference type="Gene3D" id="2.40.30.10">
    <property type="entry name" value="Translation factors"/>
    <property type="match status" value="2"/>
</dbReference>
<dbReference type="Gene3D" id="3.40.50.10050">
    <property type="entry name" value="Translation initiation factor IF- 2, domain 3"/>
    <property type="match status" value="1"/>
</dbReference>
<dbReference type="HAMAP" id="MF_00100_B">
    <property type="entry name" value="IF_2_B"/>
    <property type="match status" value="1"/>
</dbReference>
<dbReference type="InterPro" id="IPR053905">
    <property type="entry name" value="EF-G-like_DII"/>
</dbReference>
<dbReference type="InterPro" id="IPR044145">
    <property type="entry name" value="IF2_II"/>
</dbReference>
<dbReference type="InterPro" id="IPR006847">
    <property type="entry name" value="IF2_N"/>
</dbReference>
<dbReference type="InterPro" id="IPR027417">
    <property type="entry name" value="P-loop_NTPase"/>
</dbReference>
<dbReference type="InterPro" id="IPR005225">
    <property type="entry name" value="Small_GTP-bd"/>
</dbReference>
<dbReference type="InterPro" id="IPR000795">
    <property type="entry name" value="T_Tr_GTP-bd_dom"/>
</dbReference>
<dbReference type="InterPro" id="IPR000178">
    <property type="entry name" value="TF_IF2_bacterial-like"/>
</dbReference>
<dbReference type="InterPro" id="IPR015760">
    <property type="entry name" value="TIF_IF2"/>
</dbReference>
<dbReference type="InterPro" id="IPR023115">
    <property type="entry name" value="TIF_IF2_dom3"/>
</dbReference>
<dbReference type="InterPro" id="IPR036925">
    <property type="entry name" value="TIF_IF2_dom3_sf"/>
</dbReference>
<dbReference type="InterPro" id="IPR009000">
    <property type="entry name" value="Transl_B-barrel_sf"/>
</dbReference>
<dbReference type="NCBIfam" id="TIGR00487">
    <property type="entry name" value="IF-2"/>
    <property type="match status" value="1"/>
</dbReference>
<dbReference type="NCBIfam" id="TIGR00231">
    <property type="entry name" value="small_GTP"/>
    <property type="match status" value="1"/>
</dbReference>
<dbReference type="PANTHER" id="PTHR43381:SF5">
    <property type="entry name" value="TR-TYPE G DOMAIN-CONTAINING PROTEIN"/>
    <property type="match status" value="1"/>
</dbReference>
<dbReference type="PANTHER" id="PTHR43381">
    <property type="entry name" value="TRANSLATION INITIATION FACTOR IF-2-RELATED"/>
    <property type="match status" value="1"/>
</dbReference>
<dbReference type="Pfam" id="PF22042">
    <property type="entry name" value="EF-G_D2"/>
    <property type="match status" value="1"/>
</dbReference>
<dbReference type="Pfam" id="PF00009">
    <property type="entry name" value="GTP_EFTU"/>
    <property type="match status" value="1"/>
</dbReference>
<dbReference type="Pfam" id="PF11987">
    <property type="entry name" value="IF-2"/>
    <property type="match status" value="1"/>
</dbReference>
<dbReference type="Pfam" id="PF04760">
    <property type="entry name" value="IF2_N"/>
    <property type="match status" value="2"/>
</dbReference>
<dbReference type="SUPFAM" id="SSF52156">
    <property type="entry name" value="Initiation factor IF2/eIF5b, domain 3"/>
    <property type="match status" value="1"/>
</dbReference>
<dbReference type="SUPFAM" id="SSF52540">
    <property type="entry name" value="P-loop containing nucleoside triphosphate hydrolases"/>
    <property type="match status" value="1"/>
</dbReference>
<dbReference type="SUPFAM" id="SSF50447">
    <property type="entry name" value="Translation proteins"/>
    <property type="match status" value="2"/>
</dbReference>
<dbReference type="PROSITE" id="PS51722">
    <property type="entry name" value="G_TR_2"/>
    <property type="match status" value="1"/>
</dbReference>
<dbReference type="PROSITE" id="PS01176">
    <property type="entry name" value="IF2"/>
    <property type="match status" value="1"/>
</dbReference>
<comment type="function">
    <text evidence="2">One of the essential components for the initiation of protein synthesis. Protects formylmethionyl-tRNA from spontaneous hydrolysis and promotes its binding to the 30S ribosomal subunits. Also involved in the hydrolysis of GTP during the formation of the 70S ribosomal complex.</text>
</comment>
<comment type="subcellular location">
    <subcellularLocation>
        <location evidence="2">Cytoplasm</location>
    </subcellularLocation>
</comment>
<comment type="similarity">
    <text evidence="2">Belongs to the TRAFAC class translation factor GTPase superfamily. Classic translation factor GTPase family. IF-2 subfamily.</text>
</comment>